<protein>
    <recommendedName>
        <fullName evidence="1">Lipoyl synthase</fullName>
        <ecNumber evidence="1">2.8.1.8</ecNumber>
    </recommendedName>
    <alternativeName>
        <fullName evidence="1">Lip-syn</fullName>
        <shortName evidence="1">LS</shortName>
    </alternativeName>
    <alternativeName>
        <fullName evidence="1">Lipoate synthase</fullName>
    </alternativeName>
    <alternativeName>
        <fullName evidence="1">Lipoic acid synthase</fullName>
    </alternativeName>
    <alternativeName>
        <fullName evidence="1">Sulfur insertion protein LipA</fullName>
    </alternativeName>
</protein>
<comment type="function">
    <text evidence="1">Catalyzes the radical-mediated insertion of two sulfur atoms into the C-6 and C-8 positions of the octanoyl moiety bound to the lipoyl domains of lipoate-dependent enzymes, thereby converting the octanoylated domains into lipoylated derivatives.</text>
</comment>
<comment type="catalytic activity">
    <reaction evidence="1">
        <text>[[Fe-S] cluster scaffold protein carrying a second [4Fe-4S](2+) cluster] + N(6)-octanoyl-L-lysyl-[protein] + 2 oxidized [2Fe-2S]-[ferredoxin] + 2 S-adenosyl-L-methionine + 4 H(+) = [[Fe-S] cluster scaffold protein] + N(6)-[(R)-dihydrolipoyl]-L-lysyl-[protein] + 4 Fe(3+) + 2 hydrogen sulfide + 2 5'-deoxyadenosine + 2 L-methionine + 2 reduced [2Fe-2S]-[ferredoxin]</text>
        <dbReference type="Rhea" id="RHEA:16585"/>
        <dbReference type="Rhea" id="RHEA-COMP:9928"/>
        <dbReference type="Rhea" id="RHEA-COMP:10000"/>
        <dbReference type="Rhea" id="RHEA-COMP:10001"/>
        <dbReference type="Rhea" id="RHEA-COMP:10475"/>
        <dbReference type="Rhea" id="RHEA-COMP:14568"/>
        <dbReference type="Rhea" id="RHEA-COMP:14569"/>
        <dbReference type="ChEBI" id="CHEBI:15378"/>
        <dbReference type="ChEBI" id="CHEBI:17319"/>
        <dbReference type="ChEBI" id="CHEBI:29034"/>
        <dbReference type="ChEBI" id="CHEBI:29919"/>
        <dbReference type="ChEBI" id="CHEBI:33722"/>
        <dbReference type="ChEBI" id="CHEBI:33737"/>
        <dbReference type="ChEBI" id="CHEBI:33738"/>
        <dbReference type="ChEBI" id="CHEBI:57844"/>
        <dbReference type="ChEBI" id="CHEBI:59789"/>
        <dbReference type="ChEBI" id="CHEBI:78809"/>
        <dbReference type="ChEBI" id="CHEBI:83100"/>
        <dbReference type="EC" id="2.8.1.8"/>
    </reaction>
</comment>
<comment type="cofactor">
    <cofactor evidence="1">
        <name>[4Fe-4S] cluster</name>
        <dbReference type="ChEBI" id="CHEBI:49883"/>
    </cofactor>
    <text evidence="1">Binds 2 [4Fe-4S] clusters per subunit. One cluster is coordinated with 3 cysteines and an exchangeable S-adenosyl-L-methionine.</text>
</comment>
<comment type="pathway">
    <text evidence="1">Protein modification; protein lipoylation via endogenous pathway; protein N(6)-(lipoyl)lysine from octanoyl-[acyl-carrier-protein]: step 2/2.</text>
</comment>
<comment type="subcellular location">
    <subcellularLocation>
        <location evidence="1">Cytoplasm</location>
    </subcellularLocation>
</comment>
<comment type="similarity">
    <text evidence="1">Belongs to the radical SAM superfamily. Lipoyl synthase family.</text>
</comment>
<name>LIPA_LEPBJ</name>
<keyword id="KW-0004">4Fe-4S</keyword>
<keyword id="KW-0963">Cytoplasm</keyword>
<keyword id="KW-0408">Iron</keyword>
<keyword id="KW-0411">Iron-sulfur</keyword>
<keyword id="KW-0479">Metal-binding</keyword>
<keyword id="KW-0949">S-adenosyl-L-methionine</keyword>
<keyword id="KW-0808">Transferase</keyword>
<sequence>MINPLKKKPRTHFLQKAPEKPDWLKVKLTFPDPKNNPVAIVRNSLEKKKLNTVCESASCPNLNHCWSRKTATYMLGGDICTRRCSYCDVASGKPSALDRDEPKRVAESAIALGLKHVVITAVNRDDLEDGGAAHFAETVEVVREGLPDCKIELLVPDFKVRPESLEIIFQCKPDIFNHNVETIKRLFPEVAPQKKYERSLDVLKIASEKGFLTKSGLILGMGETVEEVKECMRDLIGVGVSLLTLGQYLQPTPTHLPVKSYVLPEVFQELRIYGKSIGFKGVFSGPLVRSSYHADEQVSWNP</sequence>
<gene>
    <name evidence="1" type="primary">lipA</name>
    <name type="ordered locus">LBJ_1322</name>
</gene>
<proteinExistence type="inferred from homology"/>
<organism>
    <name type="scientific">Leptospira borgpetersenii serovar Hardjo-bovis (strain JB197)</name>
    <dbReference type="NCBI Taxonomy" id="355277"/>
    <lineage>
        <taxon>Bacteria</taxon>
        <taxon>Pseudomonadati</taxon>
        <taxon>Spirochaetota</taxon>
        <taxon>Spirochaetia</taxon>
        <taxon>Leptospirales</taxon>
        <taxon>Leptospiraceae</taxon>
        <taxon>Leptospira</taxon>
    </lineage>
</organism>
<dbReference type="EC" id="2.8.1.8" evidence="1"/>
<dbReference type="EMBL" id="CP000350">
    <property type="protein sequence ID" value="ABJ75907.1"/>
    <property type="molecule type" value="Genomic_DNA"/>
</dbReference>
<dbReference type="SMR" id="Q04T63"/>
<dbReference type="KEGG" id="lbj:LBJ_1322"/>
<dbReference type="HOGENOM" id="CLU_033144_2_1_12"/>
<dbReference type="UniPathway" id="UPA00538">
    <property type="reaction ID" value="UER00593"/>
</dbReference>
<dbReference type="Proteomes" id="UP000000656">
    <property type="component" value="Chromosome 1"/>
</dbReference>
<dbReference type="GO" id="GO:0005737">
    <property type="term" value="C:cytoplasm"/>
    <property type="evidence" value="ECO:0007669"/>
    <property type="project" value="UniProtKB-SubCell"/>
</dbReference>
<dbReference type="GO" id="GO:0051539">
    <property type="term" value="F:4 iron, 4 sulfur cluster binding"/>
    <property type="evidence" value="ECO:0007669"/>
    <property type="project" value="UniProtKB-UniRule"/>
</dbReference>
<dbReference type="GO" id="GO:0016992">
    <property type="term" value="F:lipoate synthase activity"/>
    <property type="evidence" value="ECO:0007669"/>
    <property type="project" value="UniProtKB-UniRule"/>
</dbReference>
<dbReference type="GO" id="GO:0046872">
    <property type="term" value="F:metal ion binding"/>
    <property type="evidence" value="ECO:0007669"/>
    <property type="project" value="UniProtKB-KW"/>
</dbReference>
<dbReference type="CDD" id="cd01335">
    <property type="entry name" value="Radical_SAM"/>
    <property type="match status" value="1"/>
</dbReference>
<dbReference type="FunFam" id="3.20.20.70:FF:000186">
    <property type="entry name" value="Lipoyl synthase"/>
    <property type="match status" value="1"/>
</dbReference>
<dbReference type="Gene3D" id="3.20.20.70">
    <property type="entry name" value="Aldolase class I"/>
    <property type="match status" value="1"/>
</dbReference>
<dbReference type="HAMAP" id="MF_00206">
    <property type="entry name" value="Lipoyl_synth"/>
    <property type="match status" value="1"/>
</dbReference>
<dbReference type="InterPro" id="IPR013785">
    <property type="entry name" value="Aldolase_TIM"/>
</dbReference>
<dbReference type="InterPro" id="IPR006638">
    <property type="entry name" value="Elp3/MiaA/NifB-like_rSAM"/>
</dbReference>
<dbReference type="InterPro" id="IPR003698">
    <property type="entry name" value="Lipoyl_synth"/>
</dbReference>
<dbReference type="InterPro" id="IPR007197">
    <property type="entry name" value="rSAM"/>
</dbReference>
<dbReference type="NCBIfam" id="TIGR00510">
    <property type="entry name" value="lipA"/>
    <property type="match status" value="1"/>
</dbReference>
<dbReference type="NCBIfam" id="NF004019">
    <property type="entry name" value="PRK05481.1"/>
    <property type="match status" value="1"/>
</dbReference>
<dbReference type="NCBIfam" id="NF009544">
    <property type="entry name" value="PRK12928.1"/>
    <property type="match status" value="1"/>
</dbReference>
<dbReference type="PANTHER" id="PTHR10949">
    <property type="entry name" value="LIPOYL SYNTHASE"/>
    <property type="match status" value="1"/>
</dbReference>
<dbReference type="PANTHER" id="PTHR10949:SF0">
    <property type="entry name" value="LIPOYL SYNTHASE, MITOCHONDRIAL"/>
    <property type="match status" value="1"/>
</dbReference>
<dbReference type="Pfam" id="PF04055">
    <property type="entry name" value="Radical_SAM"/>
    <property type="match status" value="1"/>
</dbReference>
<dbReference type="PIRSF" id="PIRSF005963">
    <property type="entry name" value="Lipoyl_synth"/>
    <property type="match status" value="1"/>
</dbReference>
<dbReference type="SFLD" id="SFLDF00271">
    <property type="entry name" value="lipoyl_synthase"/>
    <property type="match status" value="1"/>
</dbReference>
<dbReference type="SFLD" id="SFLDG01058">
    <property type="entry name" value="lipoyl_synthase_like"/>
    <property type="match status" value="1"/>
</dbReference>
<dbReference type="SMART" id="SM00729">
    <property type="entry name" value="Elp3"/>
    <property type="match status" value="1"/>
</dbReference>
<dbReference type="SUPFAM" id="SSF102114">
    <property type="entry name" value="Radical SAM enzymes"/>
    <property type="match status" value="1"/>
</dbReference>
<dbReference type="PROSITE" id="PS51918">
    <property type="entry name" value="RADICAL_SAM"/>
    <property type="match status" value="1"/>
</dbReference>
<reference key="1">
    <citation type="journal article" date="2006" name="Proc. Natl. Acad. Sci. U.S.A.">
        <title>Genome reduction in Leptospira borgpetersenii reflects limited transmission potential.</title>
        <authorList>
            <person name="Bulach D.M."/>
            <person name="Zuerner R.L."/>
            <person name="Wilson P."/>
            <person name="Seemann T."/>
            <person name="McGrath A."/>
            <person name="Cullen P.A."/>
            <person name="Davis J."/>
            <person name="Johnson M."/>
            <person name="Kuczek E."/>
            <person name="Alt D.P."/>
            <person name="Peterson-Burch B."/>
            <person name="Coppel R.L."/>
            <person name="Rood J.I."/>
            <person name="Davies J.K."/>
            <person name="Adler B."/>
        </authorList>
    </citation>
    <scope>NUCLEOTIDE SEQUENCE [LARGE SCALE GENOMIC DNA]</scope>
    <source>
        <strain>JB197</strain>
    </source>
</reference>
<feature type="chain" id="PRO_0000325271" description="Lipoyl synthase">
    <location>
        <begin position="1"/>
        <end position="302"/>
    </location>
</feature>
<feature type="domain" description="Radical SAM core" evidence="2">
    <location>
        <begin position="66"/>
        <end position="280"/>
    </location>
</feature>
<feature type="binding site" evidence="1">
    <location>
        <position position="54"/>
    </location>
    <ligand>
        <name>[4Fe-4S] cluster</name>
        <dbReference type="ChEBI" id="CHEBI:49883"/>
        <label>1</label>
    </ligand>
</feature>
<feature type="binding site" evidence="1">
    <location>
        <position position="59"/>
    </location>
    <ligand>
        <name>[4Fe-4S] cluster</name>
        <dbReference type="ChEBI" id="CHEBI:49883"/>
        <label>1</label>
    </ligand>
</feature>
<feature type="binding site" evidence="1">
    <location>
        <position position="65"/>
    </location>
    <ligand>
        <name>[4Fe-4S] cluster</name>
        <dbReference type="ChEBI" id="CHEBI:49883"/>
        <label>1</label>
    </ligand>
</feature>
<feature type="binding site" evidence="1">
    <location>
        <position position="80"/>
    </location>
    <ligand>
        <name>[4Fe-4S] cluster</name>
        <dbReference type="ChEBI" id="CHEBI:49883"/>
        <label>2</label>
        <note>4Fe-4S-S-AdoMet</note>
    </ligand>
</feature>
<feature type="binding site" evidence="1">
    <location>
        <position position="84"/>
    </location>
    <ligand>
        <name>[4Fe-4S] cluster</name>
        <dbReference type="ChEBI" id="CHEBI:49883"/>
        <label>2</label>
        <note>4Fe-4S-S-AdoMet</note>
    </ligand>
</feature>
<feature type="binding site" evidence="1">
    <location>
        <position position="87"/>
    </location>
    <ligand>
        <name>[4Fe-4S] cluster</name>
        <dbReference type="ChEBI" id="CHEBI:49883"/>
        <label>2</label>
        <note>4Fe-4S-S-AdoMet</note>
    </ligand>
</feature>
<feature type="binding site" evidence="1">
    <location>
        <position position="291"/>
    </location>
    <ligand>
        <name>[4Fe-4S] cluster</name>
        <dbReference type="ChEBI" id="CHEBI:49883"/>
        <label>1</label>
    </ligand>
</feature>
<evidence type="ECO:0000255" key="1">
    <source>
        <dbReference type="HAMAP-Rule" id="MF_00206"/>
    </source>
</evidence>
<evidence type="ECO:0000255" key="2">
    <source>
        <dbReference type="PROSITE-ProRule" id="PRU01266"/>
    </source>
</evidence>
<accession>Q04T63</accession>